<dbReference type="EC" id="3.6.1.73" evidence="1"/>
<dbReference type="EMBL" id="CP000950">
    <property type="protein sequence ID" value="ACA69878.1"/>
    <property type="molecule type" value="Genomic_DNA"/>
</dbReference>
<dbReference type="SMR" id="B1JL21"/>
<dbReference type="KEGG" id="ypy:YPK_3611"/>
<dbReference type="PATRIC" id="fig|502800.11.peg.4363"/>
<dbReference type="GO" id="GO:0103023">
    <property type="term" value="F:ITPase activity"/>
    <property type="evidence" value="ECO:0007669"/>
    <property type="project" value="UniProtKB-EC"/>
</dbReference>
<dbReference type="GO" id="GO:0046872">
    <property type="term" value="F:metal ion binding"/>
    <property type="evidence" value="ECO:0007669"/>
    <property type="project" value="UniProtKB-KW"/>
</dbReference>
<dbReference type="GO" id="GO:0000166">
    <property type="term" value="F:nucleotide binding"/>
    <property type="evidence" value="ECO:0007669"/>
    <property type="project" value="UniProtKB-KW"/>
</dbReference>
<dbReference type="GO" id="GO:0017111">
    <property type="term" value="F:ribonucleoside triphosphate phosphatase activity"/>
    <property type="evidence" value="ECO:0000250"/>
    <property type="project" value="UniProtKB"/>
</dbReference>
<dbReference type="GO" id="GO:0009117">
    <property type="term" value="P:nucleotide metabolic process"/>
    <property type="evidence" value="ECO:0007669"/>
    <property type="project" value="UniProtKB-KW"/>
</dbReference>
<dbReference type="GO" id="GO:0006772">
    <property type="term" value="P:thiamine metabolic process"/>
    <property type="evidence" value="ECO:0007669"/>
    <property type="project" value="TreeGrafter"/>
</dbReference>
<dbReference type="FunFam" id="3.90.950.10:FF:000002">
    <property type="entry name" value="Inosine/xanthosine triphosphatase"/>
    <property type="match status" value="1"/>
</dbReference>
<dbReference type="Gene3D" id="3.90.950.10">
    <property type="match status" value="1"/>
</dbReference>
<dbReference type="HAMAP" id="MF_00648">
    <property type="entry name" value="Non_canon_purine_NTPase_YjjX"/>
    <property type="match status" value="1"/>
</dbReference>
<dbReference type="InterPro" id="IPR029001">
    <property type="entry name" value="ITPase-like_fam"/>
</dbReference>
<dbReference type="InterPro" id="IPR002786">
    <property type="entry name" value="Non_canon_purine_NTPase"/>
</dbReference>
<dbReference type="InterPro" id="IPR026533">
    <property type="entry name" value="NTPase/PRRC1"/>
</dbReference>
<dbReference type="InterPro" id="IPR050299">
    <property type="entry name" value="YjjX_NTPase"/>
</dbReference>
<dbReference type="NCBIfam" id="TIGR00258">
    <property type="entry name" value="inosine/xanthosine triphosphatase"/>
    <property type="match status" value="1"/>
</dbReference>
<dbReference type="NCBIfam" id="NF003459">
    <property type="entry name" value="PRK05074.1"/>
    <property type="match status" value="1"/>
</dbReference>
<dbReference type="PANTHER" id="PTHR34699">
    <property type="match status" value="1"/>
</dbReference>
<dbReference type="PANTHER" id="PTHR34699:SF2">
    <property type="entry name" value="NON-CANONICAL PURINE NTP PHOSPHATASE_PRRC1 DOMAIN-CONTAINING PROTEIN"/>
    <property type="match status" value="1"/>
</dbReference>
<dbReference type="Pfam" id="PF01931">
    <property type="entry name" value="NTPase_I-T"/>
    <property type="match status" value="1"/>
</dbReference>
<dbReference type="SUPFAM" id="SSF52972">
    <property type="entry name" value="ITPase-like"/>
    <property type="match status" value="1"/>
</dbReference>
<sequence>MYHVIAATTNPAKINAITLAFDDVYGPGQYRIEGVNVDSGVPLQPIGSTETRIGARQRVKNARQVRPEADFWVGIEAGIEDNMTFAWMVIEHLQARGESRSASLMLPDIILQGIRQGRELGDEMAVLSGISNVKQQGGAIGIFTQGKLTRTSVYHQALLLALVPFHNEIYQRPSPSKPAI</sequence>
<protein>
    <recommendedName>
        <fullName evidence="1">Inosine/xanthosine triphosphatase</fullName>
        <shortName evidence="1">ITPase/XTPase</shortName>
        <ecNumber evidence="1">3.6.1.73</ecNumber>
    </recommendedName>
    <alternativeName>
        <fullName evidence="1">Non-canonical purine NTP phosphatase</fullName>
    </alternativeName>
    <alternativeName>
        <fullName evidence="1">Non-standard purine NTP phosphatase</fullName>
    </alternativeName>
    <alternativeName>
        <fullName evidence="1">Nucleoside-triphosphate phosphatase</fullName>
        <shortName evidence="1">NTPase</shortName>
    </alternativeName>
</protein>
<accession>B1JL21</accession>
<gene>
    <name type="ordered locus">YPK_3611</name>
</gene>
<reference key="1">
    <citation type="submission" date="2008-02" db="EMBL/GenBank/DDBJ databases">
        <title>Complete sequence of Yersinia pseudotuberculosis YPIII.</title>
        <authorList>
            <consortium name="US DOE Joint Genome Institute"/>
            <person name="Copeland A."/>
            <person name="Lucas S."/>
            <person name="Lapidus A."/>
            <person name="Glavina del Rio T."/>
            <person name="Dalin E."/>
            <person name="Tice H."/>
            <person name="Bruce D."/>
            <person name="Goodwin L."/>
            <person name="Pitluck S."/>
            <person name="Munk A.C."/>
            <person name="Brettin T."/>
            <person name="Detter J.C."/>
            <person name="Han C."/>
            <person name="Tapia R."/>
            <person name="Schmutz J."/>
            <person name="Larimer F."/>
            <person name="Land M."/>
            <person name="Hauser L."/>
            <person name="Challacombe J.F."/>
            <person name="Green L."/>
            <person name="Lindler L.E."/>
            <person name="Nikolich M.P."/>
            <person name="Richardson P."/>
        </authorList>
    </citation>
    <scope>NUCLEOTIDE SEQUENCE [LARGE SCALE GENOMIC DNA]</scope>
    <source>
        <strain>YPIII</strain>
    </source>
</reference>
<keyword id="KW-0378">Hydrolase</keyword>
<keyword id="KW-0460">Magnesium</keyword>
<keyword id="KW-0464">Manganese</keyword>
<keyword id="KW-0479">Metal-binding</keyword>
<keyword id="KW-0546">Nucleotide metabolism</keyword>
<keyword id="KW-0547">Nucleotide-binding</keyword>
<proteinExistence type="inferred from homology"/>
<evidence type="ECO:0000255" key="1">
    <source>
        <dbReference type="HAMAP-Rule" id="MF_00648"/>
    </source>
</evidence>
<name>NCPP_YERPY</name>
<organism>
    <name type="scientific">Yersinia pseudotuberculosis serotype O:3 (strain YPIII)</name>
    <dbReference type="NCBI Taxonomy" id="502800"/>
    <lineage>
        <taxon>Bacteria</taxon>
        <taxon>Pseudomonadati</taxon>
        <taxon>Pseudomonadota</taxon>
        <taxon>Gammaproteobacteria</taxon>
        <taxon>Enterobacterales</taxon>
        <taxon>Yersiniaceae</taxon>
        <taxon>Yersinia</taxon>
    </lineage>
</organism>
<comment type="function">
    <text evidence="1">Phosphatase that hydrolyzes non-canonical purine nucleotides such as XTP and ITP to their respective diphosphate derivatives. Probably excludes non-canonical purines from DNA/RNA precursor pool, thus preventing their incorporation into DNA/RNA and avoiding chromosomal lesions.</text>
</comment>
<comment type="catalytic activity">
    <reaction evidence="1">
        <text>XTP + H2O = XDP + phosphate + H(+)</text>
        <dbReference type="Rhea" id="RHEA:28406"/>
        <dbReference type="ChEBI" id="CHEBI:15377"/>
        <dbReference type="ChEBI" id="CHEBI:15378"/>
        <dbReference type="ChEBI" id="CHEBI:43474"/>
        <dbReference type="ChEBI" id="CHEBI:59884"/>
        <dbReference type="ChEBI" id="CHEBI:61314"/>
        <dbReference type="EC" id="3.6.1.73"/>
    </reaction>
</comment>
<comment type="catalytic activity">
    <reaction evidence="1">
        <text>ITP + H2O = IDP + phosphate + H(+)</text>
        <dbReference type="Rhea" id="RHEA:28330"/>
        <dbReference type="ChEBI" id="CHEBI:15377"/>
        <dbReference type="ChEBI" id="CHEBI:15378"/>
        <dbReference type="ChEBI" id="CHEBI:43474"/>
        <dbReference type="ChEBI" id="CHEBI:58280"/>
        <dbReference type="ChEBI" id="CHEBI:61402"/>
        <dbReference type="EC" id="3.6.1.73"/>
    </reaction>
</comment>
<comment type="cofactor">
    <cofactor evidence="1">
        <name>Mg(2+)</name>
        <dbReference type="ChEBI" id="CHEBI:18420"/>
    </cofactor>
    <cofactor evidence="1">
        <name>Mn(2+)</name>
        <dbReference type="ChEBI" id="CHEBI:29035"/>
    </cofactor>
    <text evidence="1">Binds 1 divalent metal cation per subunit; can use either Mg(2+) or Mn(2+).</text>
</comment>
<comment type="subunit">
    <text evidence="1">Homodimer.</text>
</comment>
<comment type="similarity">
    <text evidence="1">Belongs to the YjjX NTPase family.</text>
</comment>
<feature type="chain" id="PRO_1000130954" description="Inosine/xanthosine triphosphatase">
    <location>
        <begin position="1"/>
        <end position="180"/>
    </location>
</feature>
<feature type="binding site" evidence="1">
    <location>
        <begin position="8"/>
        <end position="13"/>
    </location>
    <ligand>
        <name>substrate</name>
    </ligand>
</feature>
<feature type="binding site" evidence="1">
    <location>
        <position position="38"/>
    </location>
    <ligand>
        <name>Mg(2+)</name>
        <dbReference type="ChEBI" id="CHEBI:18420"/>
    </ligand>
</feature>
<feature type="binding site" evidence="1">
    <location>
        <begin position="68"/>
        <end position="69"/>
    </location>
    <ligand>
        <name>substrate</name>
    </ligand>
</feature>
<feature type="binding site" evidence="1">
    <location>
        <position position="68"/>
    </location>
    <ligand>
        <name>Mg(2+)</name>
        <dbReference type="ChEBI" id="CHEBI:18420"/>
    </ligand>
</feature>